<sequence length="645" mass="73526">MGKIKELETSLANKIAAGEVVERPSSVVKELLENAIDAQATEINIEVEQSGVSSIRVVDNGTGIAQEDLGLVFHRHATSKIVADDDLFHIRTLGFRGEALASISSVAKVTLKTCTDNENGHEIYAENGKIIHQKPAKAKKGTDIQVDSLFYNTPARLKYIKSLYTELGKITDIVNRMAMSHPEIRISLVSDGKKLLSTNGSGRTNEVMAEIYGMKVAKDLVHISGDTSDYHLEGFVAKPEHSRSNKHYISIFINGRYIKNFVLNKAILEGYHTLLTIGRFPICYINIQMDPILVDVNVHPTKLEVRLSKEDQLYDLIVTKIREAFKDKILIPQNDLNHASKKNKVLETFEQQKINFEKQQSQIGETSAPYVHDQKDKNHDVESHKNNLDSTSSTNNESTEVSNELHNHIDDSYLQSQKEVLFDMEQNTSNEYEISNQQSNDIKGTVSQTPHRRVPYMEIVGQVHGTYIIAQNENGMFMIDQHAAQERIKYEYFREKIGEVTNEVQNLLIPLTFHFSKDEQMIIDQYKDELDKVGVHLEHFGGHDYIVNSYPVWFPKEEAEEIIKDMIELVLKHKSVDVKKIREDAAIMMSCKKSIKANHYLKNNEMADLIDQLREAEDPFTCPHGRPIIINFSNYELEKLFKRVM</sequence>
<comment type="function">
    <text evidence="1">This protein is involved in the repair of mismatches in DNA. It is required for dam-dependent methyl-directed DNA mismatch repair. May act as a 'molecular matchmaker', a protein that promotes the formation of a stable complex between two or more DNA-binding proteins in an ATP-dependent manner without itself being part of a final effector complex.</text>
</comment>
<comment type="similarity">
    <text evidence="1">Belongs to the DNA mismatch repair MutL/HexB family.</text>
</comment>
<keyword id="KW-0227">DNA damage</keyword>
<keyword id="KW-0234">DNA repair</keyword>
<protein>
    <recommendedName>
        <fullName evidence="1">DNA mismatch repair protein MutL</fullName>
    </recommendedName>
</protein>
<name>MUTL_STAES</name>
<gene>
    <name evidence="1" type="primary">mutL</name>
    <name type="ordered locus">SE_0975</name>
</gene>
<accession>Q8CPE9</accession>
<feature type="chain" id="PRO_0000177975" description="DNA mismatch repair protein MutL">
    <location>
        <begin position="1"/>
        <end position="645"/>
    </location>
</feature>
<feature type="region of interest" description="Disordered" evidence="2">
    <location>
        <begin position="371"/>
        <end position="403"/>
    </location>
</feature>
<feature type="compositionally biased region" description="Basic and acidic residues" evidence="2">
    <location>
        <begin position="372"/>
        <end position="387"/>
    </location>
</feature>
<feature type="compositionally biased region" description="Low complexity" evidence="2">
    <location>
        <begin position="390"/>
        <end position="402"/>
    </location>
</feature>
<reference key="1">
    <citation type="journal article" date="2003" name="Mol. Microbiol.">
        <title>Genome-based analysis of virulence genes in a non-biofilm-forming Staphylococcus epidermidis strain (ATCC 12228).</title>
        <authorList>
            <person name="Zhang Y.-Q."/>
            <person name="Ren S.-X."/>
            <person name="Li H.-L."/>
            <person name="Wang Y.-X."/>
            <person name="Fu G."/>
            <person name="Yang J."/>
            <person name="Qin Z.-Q."/>
            <person name="Miao Y.-G."/>
            <person name="Wang W.-Y."/>
            <person name="Chen R.-S."/>
            <person name="Shen Y."/>
            <person name="Chen Z."/>
            <person name="Yuan Z.-H."/>
            <person name="Zhao G.-P."/>
            <person name="Qu D."/>
            <person name="Danchin A."/>
            <person name="Wen Y.-M."/>
        </authorList>
    </citation>
    <scope>NUCLEOTIDE SEQUENCE [LARGE SCALE GENOMIC DNA]</scope>
    <source>
        <strain>ATCC 12228 / FDA PCI 1200</strain>
    </source>
</reference>
<proteinExistence type="inferred from homology"/>
<organism>
    <name type="scientific">Staphylococcus epidermidis (strain ATCC 12228 / FDA PCI 1200)</name>
    <dbReference type="NCBI Taxonomy" id="176280"/>
    <lineage>
        <taxon>Bacteria</taxon>
        <taxon>Bacillati</taxon>
        <taxon>Bacillota</taxon>
        <taxon>Bacilli</taxon>
        <taxon>Bacillales</taxon>
        <taxon>Staphylococcaceae</taxon>
        <taxon>Staphylococcus</taxon>
    </lineage>
</organism>
<dbReference type="EMBL" id="AE015929">
    <property type="protein sequence ID" value="AAO04572.1"/>
    <property type="molecule type" value="Genomic_DNA"/>
</dbReference>
<dbReference type="RefSeq" id="NP_764530.1">
    <property type="nucleotide sequence ID" value="NC_004461.1"/>
</dbReference>
<dbReference type="RefSeq" id="WP_002439573.1">
    <property type="nucleotide sequence ID" value="NZ_WBME01000001.1"/>
</dbReference>
<dbReference type="SMR" id="Q8CPE9"/>
<dbReference type="KEGG" id="sep:SE_0975"/>
<dbReference type="PATRIC" id="fig|176280.10.peg.949"/>
<dbReference type="eggNOG" id="COG0323">
    <property type="taxonomic scope" value="Bacteria"/>
</dbReference>
<dbReference type="HOGENOM" id="CLU_004131_4_1_9"/>
<dbReference type="OrthoDB" id="9763467at2"/>
<dbReference type="Proteomes" id="UP000001411">
    <property type="component" value="Chromosome"/>
</dbReference>
<dbReference type="GO" id="GO:0032300">
    <property type="term" value="C:mismatch repair complex"/>
    <property type="evidence" value="ECO:0007669"/>
    <property type="project" value="InterPro"/>
</dbReference>
<dbReference type="GO" id="GO:0005524">
    <property type="term" value="F:ATP binding"/>
    <property type="evidence" value="ECO:0007669"/>
    <property type="project" value="InterPro"/>
</dbReference>
<dbReference type="GO" id="GO:0016887">
    <property type="term" value="F:ATP hydrolysis activity"/>
    <property type="evidence" value="ECO:0007669"/>
    <property type="project" value="InterPro"/>
</dbReference>
<dbReference type="GO" id="GO:0140664">
    <property type="term" value="F:ATP-dependent DNA damage sensor activity"/>
    <property type="evidence" value="ECO:0007669"/>
    <property type="project" value="InterPro"/>
</dbReference>
<dbReference type="GO" id="GO:0030983">
    <property type="term" value="F:mismatched DNA binding"/>
    <property type="evidence" value="ECO:0007669"/>
    <property type="project" value="InterPro"/>
</dbReference>
<dbReference type="GO" id="GO:0006298">
    <property type="term" value="P:mismatch repair"/>
    <property type="evidence" value="ECO:0007669"/>
    <property type="project" value="UniProtKB-UniRule"/>
</dbReference>
<dbReference type="CDD" id="cd16926">
    <property type="entry name" value="HATPase_MutL-MLH-PMS-like"/>
    <property type="match status" value="1"/>
</dbReference>
<dbReference type="CDD" id="cd00782">
    <property type="entry name" value="MutL_Trans"/>
    <property type="match status" value="1"/>
</dbReference>
<dbReference type="FunFam" id="3.30.1370.100:FF:000004">
    <property type="entry name" value="DNA mismatch repair endonuclease MutL"/>
    <property type="match status" value="1"/>
</dbReference>
<dbReference type="FunFam" id="3.30.230.10:FF:000036">
    <property type="entry name" value="DNA mismatch repair endonuclease MutL"/>
    <property type="match status" value="1"/>
</dbReference>
<dbReference type="FunFam" id="3.30.565.10:FF:000003">
    <property type="entry name" value="DNA mismatch repair endonuclease MutL"/>
    <property type="match status" value="1"/>
</dbReference>
<dbReference type="Gene3D" id="3.30.230.10">
    <property type="match status" value="1"/>
</dbReference>
<dbReference type="Gene3D" id="3.30.565.10">
    <property type="entry name" value="Histidine kinase-like ATPase, C-terminal domain"/>
    <property type="match status" value="1"/>
</dbReference>
<dbReference type="Gene3D" id="3.30.1540.20">
    <property type="entry name" value="MutL, C-terminal domain, dimerisation subdomain"/>
    <property type="match status" value="1"/>
</dbReference>
<dbReference type="Gene3D" id="3.30.1370.100">
    <property type="entry name" value="MutL, C-terminal domain, regulatory subdomain"/>
    <property type="match status" value="1"/>
</dbReference>
<dbReference type="HAMAP" id="MF_00149">
    <property type="entry name" value="DNA_mis_repair"/>
    <property type="match status" value="1"/>
</dbReference>
<dbReference type="InterPro" id="IPR014762">
    <property type="entry name" value="DNA_mismatch_repair_CS"/>
</dbReference>
<dbReference type="InterPro" id="IPR020667">
    <property type="entry name" value="DNA_mismatch_repair_MutL"/>
</dbReference>
<dbReference type="InterPro" id="IPR013507">
    <property type="entry name" value="DNA_mismatch_S5_2-like"/>
</dbReference>
<dbReference type="InterPro" id="IPR036890">
    <property type="entry name" value="HATPase_C_sf"/>
</dbReference>
<dbReference type="InterPro" id="IPR002099">
    <property type="entry name" value="MutL/Mlh/PMS"/>
</dbReference>
<dbReference type="InterPro" id="IPR038973">
    <property type="entry name" value="MutL/Mlh/Pms-like"/>
</dbReference>
<dbReference type="InterPro" id="IPR014790">
    <property type="entry name" value="MutL_C"/>
</dbReference>
<dbReference type="InterPro" id="IPR042120">
    <property type="entry name" value="MutL_C_dimsub"/>
</dbReference>
<dbReference type="InterPro" id="IPR042121">
    <property type="entry name" value="MutL_C_regsub"/>
</dbReference>
<dbReference type="InterPro" id="IPR037198">
    <property type="entry name" value="MutL_C_sf"/>
</dbReference>
<dbReference type="InterPro" id="IPR020568">
    <property type="entry name" value="Ribosomal_Su5_D2-typ_SF"/>
</dbReference>
<dbReference type="InterPro" id="IPR014721">
    <property type="entry name" value="Ribsml_uS5_D2-typ_fold_subgr"/>
</dbReference>
<dbReference type="NCBIfam" id="TIGR00585">
    <property type="entry name" value="mutl"/>
    <property type="match status" value="1"/>
</dbReference>
<dbReference type="NCBIfam" id="NF000950">
    <property type="entry name" value="PRK00095.1-3"/>
    <property type="match status" value="1"/>
</dbReference>
<dbReference type="PANTHER" id="PTHR10073">
    <property type="entry name" value="DNA MISMATCH REPAIR PROTEIN MLH, PMS, MUTL"/>
    <property type="match status" value="1"/>
</dbReference>
<dbReference type="PANTHER" id="PTHR10073:SF12">
    <property type="entry name" value="DNA MISMATCH REPAIR PROTEIN MLH1"/>
    <property type="match status" value="1"/>
</dbReference>
<dbReference type="Pfam" id="PF01119">
    <property type="entry name" value="DNA_mis_repair"/>
    <property type="match status" value="1"/>
</dbReference>
<dbReference type="Pfam" id="PF13589">
    <property type="entry name" value="HATPase_c_3"/>
    <property type="match status" value="1"/>
</dbReference>
<dbReference type="Pfam" id="PF08676">
    <property type="entry name" value="MutL_C"/>
    <property type="match status" value="1"/>
</dbReference>
<dbReference type="SMART" id="SM01340">
    <property type="entry name" value="DNA_mis_repair"/>
    <property type="match status" value="1"/>
</dbReference>
<dbReference type="SMART" id="SM00853">
    <property type="entry name" value="MutL_C"/>
    <property type="match status" value="1"/>
</dbReference>
<dbReference type="SUPFAM" id="SSF55874">
    <property type="entry name" value="ATPase domain of HSP90 chaperone/DNA topoisomerase II/histidine kinase"/>
    <property type="match status" value="1"/>
</dbReference>
<dbReference type="SUPFAM" id="SSF118116">
    <property type="entry name" value="DNA mismatch repair protein MutL"/>
    <property type="match status" value="1"/>
</dbReference>
<dbReference type="SUPFAM" id="SSF54211">
    <property type="entry name" value="Ribosomal protein S5 domain 2-like"/>
    <property type="match status" value="1"/>
</dbReference>
<dbReference type="PROSITE" id="PS00058">
    <property type="entry name" value="DNA_MISMATCH_REPAIR_1"/>
    <property type="match status" value="1"/>
</dbReference>
<evidence type="ECO:0000255" key="1">
    <source>
        <dbReference type="HAMAP-Rule" id="MF_00149"/>
    </source>
</evidence>
<evidence type="ECO:0000256" key="2">
    <source>
        <dbReference type="SAM" id="MobiDB-lite"/>
    </source>
</evidence>